<dbReference type="EMBL" id="AP009493">
    <property type="protein sequence ID" value="BAG21782.1"/>
    <property type="molecule type" value="Genomic_DNA"/>
</dbReference>
<dbReference type="RefSeq" id="WP_003969204.1">
    <property type="nucleotide sequence ID" value="NC_010572.1"/>
</dbReference>
<dbReference type="SMR" id="B1VXD6"/>
<dbReference type="GeneID" id="87631662"/>
<dbReference type="KEGG" id="sgr:SGR_4953"/>
<dbReference type="eggNOG" id="COG0261">
    <property type="taxonomic scope" value="Bacteria"/>
</dbReference>
<dbReference type="HOGENOM" id="CLU_061463_3_0_11"/>
<dbReference type="Proteomes" id="UP000001685">
    <property type="component" value="Chromosome"/>
</dbReference>
<dbReference type="GO" id="GO:0005737">
    <property type="term" value="C:cytoplasm"/>
    <property type="evidence" value="ECO:0007669"/>
    <property type="project" value="UniProtKB-ARBA"/>
</dbReference>
<dbReference type="GO" id="GO:1990904">
    <property type="term" value="C:ribonucleoprotein complex"/>
    <property type="evidence" value="ECO:0007669"/>
    <property type="project" value="UniProtKB-KW"/>
</dbReference>
<dbReference type="GO" id="GO:0005840">
    <property type="term" value="C:ribosome"/>
    <property type="evidence" value="ECO:0007669"/>
    <property type="project" value="UniProtKB-KW"/>
</dbReference>
<dbReference type="GO" id="GO:0019843">
    <property type="term" value="F:rRNA binding"/>
    <property type="evidence" value="ECO:0007669"/>
    <property type="project" value="UniProtKB-UniRule"/>
</dbReference>
<dbReference type="GO" id="GO:0003735">
    <property type="term" value="F:structural constituent of ribosome"/>
    <property type="evidence" value="ECO:0007669"/>
    <property type="project" value="InterPro"/>
</dbReference>
<dbReference type="GO" id="GO:0006412">
    <property type="term" value="P:translation"/>
    <property type="evidence" value="ECO:0007669"/>
    <property type="project" value="UniProtKB-UniRule"/>
</dbReference>
<dbReference type="HAMAP" id="MF_01363">
    <property type="entry name" value="Ribosomal_bL21"/>
    <property type="match status" value="1"/>
</dbReference>
<dbReference type="InterPro" id="IPR028909">
    <property type="entry name" value="bL21-like"/>
</dbReference>
<dbReference type="InterPro" id="IPR036164">
    <property type="entry name" value="bL21-like_sf"/>
</dbReference>
<dbReference type="InterPro" id="IPR001787">
    <property type="entry name" value="Ribosomal_bL21"/>
</dbReference>
<dbReference type="InterPro" id="IPR018258">
    <property type="entry name" value="Ribosomal_bL21_CS"/>
</dbReference>
<dbReference type="NCBIfam" id="TIGR00061">
    <property type="entry name" value="L21"/>
    <property type="match status" value="1"/>
</dbReference>
<dbReference type="PANTHER" id="PTHR21349">
    <property type="entry name" value="50S RIBOSOMAL PROTEIN L21"/>
    <property type="match status" value="1"/>
</dbReference>
<dbReference type="PANTHER" id="PTHR21349:SF0">
    <property type="entry name" value="LARGE RIBOSOMAL SUBUNIT PROTEIN BL21M"/>
    <property type="match status" value="1"/>
</dbReference>
<dbReference type="Pfam" id="PF00829">
    <property type="entry name" value="Ribosomal_L21p"/>
    <property type="match status" value="1"/>
</dbReference>
<dbReference type="SUPFAM" id="SSF141091">
    <property type="entry name" value="L21p-like"/>
    <property type="match status" value="1"/>
</dbReference>
<dbReference type="PROSITE" id="PS01169">
    <property type="entry name" value="RIBOSOMAL_L21"/>
    <property type="match status" value="1"/>
</dbReference>
<protein>
    <recommendedName>
        <fullName evidence="1">Large ribosomal subunit protein bL21</fullName>
    </recommendedName>
    <alternativeName>
        <fullName evidence="2">50S ribosomal protein L21</fullName>
    </alternativeName>
</protein>
<sequence length="106" mass="11566">MYAIVRSGGRQHKVAVGDIVEVDKISTAKVGDTVELSTLLVVDGDAVTSDPWVLDGIKVTAEIVDHHKGAKIDILRYKNKTGYRRRQGHRQQYTAIKVTGIPAAAK</sequence>
<accession>B1VXD6</accession>
<organism>
    <name type="scientific">Streptomyces griseus subsp. griseus (strain JCM 4626 / CBS 651.72 / NBRC 13350 / KCC S-0626 / ISP 5235)</name>
    <dbReference type="NCBI Taxonomy" id="455632"/>
    <lineage>
        <taxon>Bacteria</taxon>
        <taxon>Bacillati</taxon>
        <taxon>Actinomycetota</taxon>
        <taxon>Actinomycetes</taxon>
        <taxon>Kitasatosporales</taxon>
        <taxon>Streptomycetaceae</taxon>
        <taxon>Streptomyces</taxon>
    </lineage>
</organism>
<comment type="function">
    <text evidence="1">This protein binds to 23S rRNA in the presence of protein L20.</text>
</comment>
<comment type="subunit">
    <text evidence="1">Part of the 50S ribosomal subunit. Contacts protein L20.</text>
</comment>
<comment type="similarity">
    <text evidence="1">Belongs to the bacterial ribosomal protein bL21 family.</text>
</comment>
<evidence type="ECO:0000255" key="1">
    <source>
        <dbReference type="HAMAP-Rule" id="MF_01363"/>
    </source>
</evidence>
<evidence type="ECO:0000305" key="2"/>
<proteinExistence type="inferred from homology"/>
<reference key="1">
    <citation type="journal article" date="2008" name="J. Bacteriol.">
        <title>Genome sequence of the streptomycin-producing microorganism Streptomyces griseus IFO 13350.</title>
        <authorList>
            <person name="Ohnishi Y."/>
            <person name="Ishikawa J."/>
            <person name="Hara H."/>
            <person name="Suzuki H."/>
            <person name="Ikenoya M."/>
            <person name="Ikeda H."/>
            <person name="Yamashita A."/>
            <person name="Hattori M."/>
            <person name="Horinouchi S."/>
        </authorList>
    </citation>
    <scope>NUCLEOTIDE SEQUENCE [LARGE SCALE GENOMIC DNA]</scope>
    <source>
        <strain>JCM 4626 / CBS 651.72 / NBRC 13350 / KCC S-0626 / ISP 5235</strain>
    </source>
</reference>
<name>RL21_STRGG</name>
<gene>
    <name evidence="1" type="primary">rplU</name>
    <name type="ordered locus">SGR_4953</name>
</gene>
<feature type="chain" id="PRO_1000143854" description="Large ribosomal subunit protein bL21">
    <location>
        <begin position="1"/>
        <end position="106"/>
    </location>
</feature>
<keyword id="KW-0687">Ribonucleoprotein</keyword>
<keyword id="KW-0689">Ribosomal protein</keyword>
<keyword id="KW-0694">RNA-binding</keyword>
<keyword id="KW-0699">rRNA-binding</keyword>